<dbReference type="EC" id="2.4.99.28" evidence="1"/>
<dbReference type="EMBL" id="CP001127">
    <property type="protein sequence ID" value="ACF90473.1"/>
    <property type="molecule type" value="Genomic_DNA"/>
</dbReference>
<dbReference type="RefSeq" id="WP_000044656.1">
    <property type="nucleotide sequence ID" value="NC_011094.1"/>
</dbReference>
<dbReference type="SMR" id="B4TWH8"/>
<dbReference type="CAZy" id="GT51">
    <property type="family name" value="Glycosyltransferase Family 51"/>
</dbReference>
<dbReference type="KEGG" id="sew:SeSA_A3518"/>
<dbReference type="HOGENOM" id="CLU_006354_1_1_6"/>
<dbReference type="UniPathway" id="UPA00219"/>
<dbReference type="Proteomes" id="UP000001865">
    <property type="component" value="Chromosome"/>
</dbReference>
<dbReference type="GO" id="GO:0009274">
    <property type="term" value="C:peptidoglycan-based cell wall"/>
    <property type="evidence" value="ECO:0007669"/>
    <property type="project" value="InterPro"/>
</dbReference>
<dbReference type="GO" id="GO:0005886">
    <property type="term" value="C:plasma membrane"/>
    <property type="evidence" value="ECO:0007669"/>
    <property type="project" value="UniProtKB-SubCell"/>
</dbReference>
<dbReference type="GO" id="GO:0016763">
    <property type="term" value="F:pentosyltransferase activity"/>
    <property type="evidence" value="ECO:0007669"/>
    <property type="project" value="InterPro"/>
</dbReference>
<dbReference type="GO" id="GO:0008955">
    <property type="term" value="F:peptidoglycan glycosyltransferase activity"/>
    <property type="evidence" value="ECO:0007669"/>
    <property type="project" value="UniProtKB-UniRule"/>
</dbReference>
<dbReference type="GO" id="GO:0071555">
    <property type="term" value="P:cell wall organization"/>
    <property type="evidence" value="ECO:0007669"/>
    <property type="project" value="UniProtKB-KW"/>
</dbReference>
<dbReference type="GO" id="GO:0009252">
    <property type="term" value="P:peptidoglycan biosynthetic process"/>
    <property type="evidence" value="ECO:0007669"/>
    <property type="project" value="UniProtKB-UniRule"/>
</dbReference>
<dbReference type="GO" id="GO:0008360">
    <property type="term" value="P:regulation of cell shape"/>
    <property type="evidence" value="ECO:0007669"/>
    <property type="project" value="UniProtKB-KW"/>
</dbReference>
<dbReference type="Gene3D" id="1.10.3810.10">
    <property type="entry name" value="Biosynthetic peptidoglycan transglycosylase-like"/>
    <property type="match status" value="1"/>
</dbReference>
<dbReference type="HAMAP" id="MF_00766">
    <property type="entry name" value="PGT_MtgA"/>
    <property type="match status" value="1"/>
</dbReference>
<dbReference type="InterPro" id="IPR001264">
    <property type="entry name" value="Glyco_trans_51"/>
</dbReference>
<dbReference type="InterPro" id="IPR023346">
    <property type="entry name" value="Lysozyme-like_dom_sf"/>
</dbReference>
<dbReference type="InterPro" id="IPR036950">
    <property type="entry name" value="PBP_transglycosylase"/>
</dbReference>
<dbReference type="InterPro" id="IPR011812">
    <property type="entry name" value="Pep_trsgly"/>
</dbReference>
<dbReference type="NCBIfam" id="TIGR02070">
    <property type="entry name" value="mono_pep_trsgly"/>
    <property type="match status" value="1"/>
</dbReference>
<dbReference type="PANTHER" id="PTHR30400:SF0">
    <property type="entry name" value="BIOSYNTHETIC PEPTIDOGLYCAN TRANSGLYCOSYLASE"/>
    <property type="match status" value="1"/>
</dbReference>
<dbReference type="PANTHER" id="PTHR30400">
    <property type="entry name" value="MONOFUNCTIONAL BIOSYNTHETIC PEPTIDOGLYCAN TRANSGLYCOSYLASE"/>
    <property type="match status" value="1"/>
</dbReference>
<dbReference type="Pfam" id="PF00912">
    <property type="entry name" value="Transgly"/>
    <property type="match status" value="1"/>
</dbReference>
<dbReference type="SUPFAM" id="SSF53955">
    <property type="entry name" value="Lysozyme-like"/>
    <property type="match status" value="1"/>
</dbReference>
<evidence type="ECO:0000255" key="1">
    <source>
        <dbReference type="HAMAP-Rule" id="MF_00766"/>
    </source>
</evidence>
<comment type="function">
    <text evidence="1">Peptidoglycan polymerase that catalyzes glycan chain elongation from lipid-linked precursors.</text>
</comment>
<comment type="catalytic activity">
    <reaction evidence="1">
        <text>[GlcNAc-(1-&gt;4)-Mur2Ac(oyl-L-Ala-gamma-D-Glu-L-Lys-D-Ala-D-Ala)](n)-di-trans,octa-cis-undecaprenyl diphosphate + beta-D-GlcNAc-(1-&gt;4)-Mur2Ac(oyl-L-Ala-gamma-D-Glu-L-Lys-D-Ala-D-Ala)-di-trans,octa-cis-undecaprenyl diphosphate = [GlcNAc-(1-&gt;4)-Mur2Ac(oyl-L-Ala-gamma-D-Glu-L-Lys-D-Ala-D-Ala)](n+1)-di-trans,octa-cis-undecaprenyl diphosphate + di-trans,octa-cis-undecaprenyl diphosphate + H(+)</text>
        <dbReference type="Rhea" id="RHEA:23708"/>
        <dbReference type="Rhea" id="RHEA-COMP:9602"/>
        <dbReference type="Rhea" id="RHEA-COMP:9603"/>
        <dbReference type="ChEBI" id="CHEBI:15378"/>
        <dbReference type="ChEBI" id="CHEBI:58405"/>
        <dbReference type="ChEBI" id="CHEBI:60033"/>
        <dbReference type="ChEBI" id="CHEBI:78435"/>
        <dbReference type="EC" id="2.4.99.28"/>
    </reaction>
</comment>
<comment type="pathway">
    <text evidence="1">Cell wall biogenesis; peptidoglycan biosynthesis.</text>
</comment>
<comment type="subcellular location">
    <subcellularLocation>
        <location evidence="1">Cell inner membrane</location>
        <topology evidence="1">Single-pass membrane protein</topology>
    </subcellularLocation>
</comment>
<comment type="similarity">
    <text evidence="1">Belongs to the glycosyltransferase 51 family.</text>
</comment>
<accession>B4TWH8</accession>
<organism>
    <name type="scientific">Salmonella schwarzengrund (strain CVM19633)</name>
    <dbReference type="NCBI Taxonomy" id="439843"/>
    <lineage>
        <taxon>Bacteria</taxon>
        <taxon>Pseudomonadati</taxon>
        <taxon>Pseudomonadota</taxon>
        <taxon>Gammaproteobacteria</taxon>
        <taxon>Enterobacterales</taxon>
        <taxon>Enterobacteriaceae</taxon>
        <taxon>Salmonella</taxon>
    </lineage>
</organism>
<proteinExistence type="inferred from homology"/>
<reference key="1">
    <citation type="journal article" date="2011" name="J. Bacteriol.">
        <title>Comparative genomics of 28 Salmonella enterica isolates: evidence for CRISPR-mediated adaptive sublineage evolution.</title>
        <authorList>
            <person name="Fricke W.F."/>
            <person name="Mammel M.K."/>
            <person name="McDermott P.F."/>
            <person name="Tartera C."/>
            <person name="White D.G."/>
            <person name="Leclerc J.E."/>
            <person name="Ravel J."/>
            <person name="Cebula T.A."/>
        </authorList>
    </citation>
    <scope>NUCLEOTIDE SEQUENCE [LARGE SCALE GENOMIC DNA]</scope>
    <source>
        <strain>CVM19633</strain>
    </source>
</reference>
<protein>
    <recommendedName>
        <fullName evidence="1">Biosynthetic peptidoglycan transglycosylase</fullName>
        <ecNumber evidence="1">2.4.99.28</ecNumber>
    </recommendedName>
    <alternativeName>
        <fullName evidence="1">Glycan polymerase</fullName>
    </alternativeName>
    <alternativeName>
        <fullName evidence="1">Peptidoglycan glycosyltransferase MtgA</fullName>
        <shortName evidence="1">PGT</shortName>
    </alternativeName>
</protein>
<feature type="chain" id="PRO_1000133611" description="Biosynthetic peptidoglycan transglycosylase">
    <location>
        <begin position="1"/>
        <end position="242"/>
    </location>
</feature>
<feature type="transmembrane region" description="Helical" evidence="1">
    <location>
        <begin position="19"/>
        <end position="39"/>
    </location>
</feature>
<sequence length="242" mass="27050">MSKRRIAPLTFLRRLLLRILAALAVFWGGGIALFSVVPVPFSAVMAERQISAWLSGEFGYVAHSDWVSMADISPWMGLAVIAAEDQKFPEHWGFDVPAIEKALAHNERNESRIRGASTLSQQTAKNLFLWDGRSWVRKGLEAGLTLGIETVWSKKRILTVYLNIAEFGDGIFGVEAAAQRYFHKPASRLSMSEAALLAAVLPNPLRYKANAPSGYVRSRQAWIMRQMRQLGGESFMTRNQLN</sequence>
<gene>
    <name evidence="1" type="primary">mtgA</name>
    <name type="ordered locus">SeSA_A3518</name>
</gene>
<keyword id="KW-0997">Cell inner membrane</keyword>
<keyword id="KW-1003">Cell membrane</keyword>
<keyword id="KW-0133">Cell shape</keyword>
<keyword id="KW-0961">Cell wall biogenesis/degradation</keyword>
<keyword id="KW-0328">Glycosyltransferase</keyword>
<keyword id="KW-0472">Membrane</keyword>
<keyword id="KW-0573">Peptidoglycan synthesis</keyword>
<keyword id="KW-0808">Transferase</keyword>
<keyword id="KW-0812">Transmembrane</keyword>
<keyword id="KW-1133">Transmembrane helix</keyword>
<name>MTGA_SALSV</name>